<feature type="chain" id="PRO_1000188305" description="Cysteine desulfurase">
    <location>
        <begin position="1"/>
        <end position="406"/>
    </location>
</feature>
<feature type="active site" description="Cysteine persulfide intermediate" evidence="1">
    <location>
        <position position="364"/>
    </location>
</feature>
<feature type="modified residue" description="N6-(pyridoxal phosphate)lysine" evidence="1">
    <location>
        <position position="226"/>
    </location>
</feature>
<comment type="function">
    <text evidence="1">Cysteine desulfurases mobilize the sulfur from L-cysteine to yield L-alanine, an essential step in sulfur metabolism for biosynthesis of a variety of sulfur-containing biomolecules. Component of the suf operon, which is activated and required under specific conditions such as oxidative stress and iron limitation. Acts as a potent selenocysteine lyase in vitro, that mobilizes selenium from L-selenocysteine. Selenocysteine lyase activity is however unsure in vivo.</text>
</comment>
<comment type="catalytic activity">
    <reaction evidence="1">
        <text>(sulfur carrier)-H + L-cysteine = (sulfur carrier)-SH + L-alanine</text>
        <dbReference type="Rhea" id="RHEA:43892"/>
        <dbReference type="Rhea" id="RHEA-COMP:14737"/>
        <dbReference type="Rhea" id="RHEA-COMP:14739"/>
        <dbReference type="ChEBI" id="CHEBI:29917"/>
        <dbReference type="ChEBI" id="CHEBI:35235"/>
        <dbReference type="ChEBI" id="CHEBI:57972"/>
        <dbReference type="ChEBI" id="CHEBI:64428"/>
        <dbReference type="EC" id="2.8.1.7"/>
    </reaction>
</comment>
<comment type="catalytic activity">
    <reaction evidence="1">
        <text>L-selenocysteine + AH2 = hydrogenselenide + L-alanine + A + H(+)</text>
        <dbReference type="Rhea" id="RHEA:11632"/>
        <dbReference type="ChEBI" id="CHEBI:13193"/>
        <dbReference type="ChEBI" id="CHEBI:15378"/>
        <dbReference type="ChEBI" id="CHEBI:17499"/>
        <dbReference type="ChEBI" id="CHEBI:29317"/>
        <dbReference type="ChEBI" id="CHEBI:57843"/>
        <dbReference type="ChEBI" id="CHEBI:57972"/>
        <dbReference type="EC" id="4.4.1.16"/>
    </reaction>
</comment>
<comment type="cofactor">
    <cofactor evidence="1">
        <name>pyridoxal 5'-phosphate</name>
        <dbReference type="ChEBI" id="CHEBI:597326"/>
    </cofactor>
</comment>
<comment type="pathway">
    <text evidence="1">Cofactor biosynthesis; iron-sulfur cluster biosynthesis.</text>
</comment>
<comment type="subunit">
    <text evidence="1">Homodimer. Interacts with SufE and the SufBCD complex composed of SufB, SufC and SufD. The interaction with SufE is required to mediate the direct transfer of the sulfur atom from the S-sulfanylcysteine.</text>
</comment>
<comment type="subcellular location">
    <subcellularLocation>
        <location evidence="1">Cytoplasm</location>
    </subcellularLocation>
</comment>
<comment type="similarity">
    <text evidence="1">Belongs to the class-V pyridoxal-phosphate-dependent aminotransferase family. Csd subfamily.</text>
</comment>
<evidence type="ECO:0000255" key="1">
    <source>
        <dbReference type="HAMAP-Rule" id="MF_01831"/>
    </source>
</evidence>
<gene>
    <name evidence="1" type="primary">sufS</name>
    <name type="ordered locus">SeD_A1969</name>
</gene>
<reference key="1">
    <citation type="journal article" date="2011" name="J. Bacteriol.">
        <title>Comparative genomics of 28 Salmonella enterica isolates: evidence for CRISPR-mediated adaptive sublineage evolution.</title>
        <authorList>
            <person name="Fricke W.F."/>
            <person name="Mammel M.K."/>
            <person name="McDermott P.F."/>
            <person name="Tartera C."/>
            <person name="White D.G."/>
            <person name="Leclerc J.E."/>
            <person name="Ravel J."/>
            <person name="Cebula T.A."/>
        </authorList>
    </citation>
    <scope>NUCLEOTIDE SEQUENCE [LARGE SCALE GENOMIC DNA]</scope>
    <source>
        <strain>CT_02021853</strain>
    </source>
</reference>
<sequence length="406" mass="44514">MTFPVEKVRADFPILQREVNGLPLAYLDSAASAQKPNQVIDAESAFYRHGYAAVHRGIHTLSVQATESMENVRKQASRFINARSAEELVFVRGTTEGINLVANSWGTENIRAGDNIIISEMEHHANIVPWQILCERKGAELRVIPLHPDGTLRLETLAALFDDRTRLLAITHVSNVLGTENPLPDMIALARQHGAKVLVDGAQAVMHHAVDVQALDCDFYVFSGHKLYGPTGIGILYVKEALLQEMPPWEGGGSMISTVSLTQGTTWAKAPWRFEAGTPNTGGIIGLGAAIDYVTSLGLDKIGDYEQMLMRYALEQLAQVPDITLYGPAQRLGVIAFNLGKHHAYDVGSFLDNYGIAVRTGHHCAMPLMAWYGVPAMCRASLAMYNTHEEVDRLVAGLTRIHRLLG</sequence>
<proteinExistence type="inferred from homology"/>
<protein>
    <recommendedName>
        <fullName evidence="1">Cysteine desulfurase</fullName>
        <ecNumber evidence="1">2.8.1.7</ecNumber>
    </recommendedName>
    <alternativeName>
        <fullName evidence="1">Selenocysteine beta-lyase</fullName>
        <shortName evidence="1">SCL</shortName>
    </alternativeName>
    <alternativeName>
        <fullName evidence="1">Selenocysteine lyase</fullName>
        <ecNumber evidence="1">4.4.1.16</ecNumber>
    </alternativeName>
    <alternativeName>
        <fullName evidence="1">Selenocysteine reductase</fullName>
    </alternativeName>
</protein>
<dbReference type="EC" id="2.8.1.7" evidence="1"/>
<dbReference type="EC" id="4.4.1.16" evidence="1"/>
<dbReference type="EMBL" id="CP001144">
    <property type="protein sequence ID" value="ACH75457.1"/>
    <property type="molecule type" value="Genomic_DNA"/>
</dbReference>
<dbReference type="RefSeq" id="WP_000143871.1">
    <property type="nucleotide sequence ID" value="NC_011205.1"/>
</dbReference>
<dbReference type="SMR" id="B5FIM3"/>
<dbReference type="KEGG" id="sed:SeD_A1969"/>
<dbReference type="HOGENOM" id="CLU_003433_2_5_6"/>
<dbReference type="UniPathway" id="UPA00266"/>
<dbReference type="Proteomes" id="UP000008322">
    <property type="component" value="Chromosome"/>
</dbReference>
<dbReference type="GO" id="GO:0005737">
    <property type="term" value="C:cytoplasm"/>
    <property type="evidence" value="ECO:0007669"/>
    <property type="project" value="UniProtKB-SubCell"/>
</dbReference>
<dbReference type="GO" id="GO:0031071">
    <property type="term" value="F:cysteine desulfurase activity"/>
    <property type="evidence" value="ECO:0007669"/>
    <property type="project" value="UniProtKB-UniRule"/>
</dbReference>
<dbReference type="GO" id="GO:0030170">
    <property type="term" value="F:pyridoxal phosphate binding"/>
    <property type="evidence" value="ECO:0007669"/>
    <property type="project" value="InterPro"/>
</dbReference>
<dbReference type="GO" id="GO:0009000">
    <property type="term" value="F:selenocysteine lyase activity"/>
    <property type="evidence" value="ECO:0007669"/>
    <property type="project" value="UniProtKB-UniRule"/>
</dbReference>
<dbReference type="GO" id="GO:0006534">
    <property type="term" value="P:cysteine metabolic process"/>
    <property type="evidence" value="ECO:0007669"/>
    <property type="project" value="InterPro"/>
</dbReference>
<dbReference type="CDD" id="cd06453">
    <property type="entry name" value="SufS_like"/>
    <property type="match status" value="1"/>
</dbReference>
<dbReference type="FunFam" id="3.40.640.10:FF:000042">
    <property type="entry name" value="Cysteine desulfurase"/>
    <property type="match status" value="1"/>
</dbReference>
<dbReference type="Gene3D" id="3.90.1150.10">
    <property type="entry name" value="Aspartate Aminotransferase, domain 1"/>
    <property type="match status" value="1"/>
</dbReference>
<dbReference type="Gene3D" id="3.40.640.10">
    <property type="entry name" value="Type I PLP-dependent aspartate aminotransferase-like (Major domain)"/>
    <property type="match status" value="1"/>
</dbReference>
<dbReference type="HAMAP" id="MF_01831">
    <property type="entry name" value="SufS_aminotrans_5"/>
    <property type="match status" value="1"/>
</dbReference>
<dbReference type="InterPro" id="IPR000192">
    <property type="entry name" value="Aminotrans_V_dom"/>
</dbReference>
<dbReference type="InterPro" id="IPR020578">
    <property type="entry name" value="Aminotrans_V_PyrdxlP_BS"/>
</dbReference>
<dbReference type="InterPro" id="IPR010970">
    <property type="entry name" value="Cys_dSase_SufS"/>
</dbReference>
<dbReference type="InterPro" id="IPR015424">
    <property type="entry name" value="PyrdxlP-dep_Trfase"/>
</dbReference>
<dbReference type="InterPro" id="IPR015421">
    <property type="entry name" value="PyrdxlP-dep_Trfase_major"/>
</dbReference>
<dbReference type="InterPro" id="IPR015422">
    <property type="entry name" value="PyrdxlP-dep_Trfase_small"/>
</dbReference>
<dbReference type="NCBIfam" id="NF006791">
    <property type="entry name" value="PRK09295.1"/>
    <property type="match status" value="1"/>
</dbReference>
<dbReference type="NCBIfam" id="TIGR01979">
    <property type="entry name" value="sufS"/>
    <property type="match status" value="1"/>
</dbReference>
<dbReference type="PANTHER" id="PTHR43586">
    <property type="entry name" value="CYSTEINE DESULFURASE"/>
    <property type="match status" value="1"/>
</dbReference>
<dbReference type="PANTHER" id="PTHR43586:SF25">
    <property type="entry name" value="CYSTEINE DESULFURASE"/>
    <property type="match status" value="1"/>
</dbReference>
<dbReference type="Pfam" id="PF00266">
    <property type="entry name" value="Aminotran_5"/>
    <property type="match status" value="1"/>
</dbReference>
<dbReference type="SUPFAM" id="SSF53383">
    <property type="entry name" value="PLP-dependent transferases"/>
    <property type="match status" value="1"/>
</dbReference>
<dbReference type="PROSITE" id="PS00595">
    <property type="entry name" value="AA_TRANSFER_CLASS_5"/>
    <property type="match status" value="1"/>
</dbReference>
<organism>
    <name type="scientific">Salmonella dublin (strain CT_02021853)</name>
    <dbReference type="NCBI Taxonomy" id="439851"/>
    <lineage>
        <taxon>Bacteria</taxon>
        <taxon>Pseudomonadati</taxon>
        <taxon>Pseudomonadota</taxon>
        <taxon>Gammaproteobacteria</taxon>
        <taxon>Enterobacterales</taxon>
        <taxon>Enterobacteriaceae</taxon>
        <taxon>Salmonella</taxon>
    </lineage>
</organism>
<keyword id="KW-0963">Cytoplasm</keyword>
<keyword id="KW-0456">Lyase</keyword>
<keyword id="KW-0663">Pyridoxal phosphate</keyword>
<keyword id="KW-0808">Transferase</keyword>
<name>SUFS_SALDC</name>
<accession>B5FIM3</accession>